<gene>
    <name evidence="1" type="primary">ybeY</name>
    <name type="ordered locus">Rleg2_0017</name>
</gene>
<protein>
    <recommendedName>
        <fullName evidence="1">Endoribonuclease YbeY</fullName>
        <ecNumber evidence="1">3.1.-.-</ecNumber>
    </recommendedName>
</protein>
<evidence type="ECO:0000255" key="1">
    <source>
        <dbReference type="HAMAP-Rule" id="MF_00009"/>
    </source>
</evidence>
<organism>
    <name type="scientific">Rhizobium leguminosarum bv. trifolii (strain WSM2304)</name>
    <dbReference type="NCBI Taxonomy" id="395492"/>
    <lineage>
        <taxon>Bacteria</taxon>
        <taxon>Pseudomonadati</taxon>
        <taxon>Pseudomonadota</taxon>
        <taxon>Alphaproteobacteria</taxon>
        <taxon>Hyphomicrobiales</taxon>
        <taxon>Rhizobiaceae</taxon>
        <taxon>Rhizobium/Agrobacterium group</taxon>
        <taxon>Rhizobium</taxon>
    </lineage>
</organism>
<feature type="chain" id="PRO_1000089200" description="Endoribonuclease YbeY">
    <location>
        <begin position="1"/>
        <end position="171"/>
    </location>
</feature>
<feature type="binding site" evidence="1">
    <location>
        <position position="126"/>
    </location>
    <ligand>
        <name>Zn(2+)</name>
        <dbReference type="ChEBI" id="CHEBI:29105"/>
        <note>catalytic</note>
    </ligand>
</feature>
<feature type="binding site" evidence="1">
    <location>
        <position position="130"/>
    </location>
    <ligand>
        <name>Zn(2+)</name>
        <dbReference type="ChEBI" id="CHEBI:29105"/>
        <note>catalytic</note>
    </ligand>
</feature>
<feature type="binding site" evidence="1">
    <location>
        <position position="136"/>
    </location>
    <ligand>
        <name>Zn(2+)</name>
        <dbReference type="ChEBI" id="CHEBI:29105"/>
        <note>catalytic</note>
    </ligand>
</feature>
<reference key="1">
    <citation type="journal article" date="2010" name="Stand. Genomic Sci.">
        <title>Complete genome sequence of Rhizobium leguminosarum bv trifolii strain WSM2304, an effective microsymbiont of the South American clover Trifolium polymorphum.</title>
        <authorList>
            <person name="Reeve W."/>
            <person name="O'Hara G."/>
            <person name="Chain P."/>
            <person name="Ardley J."/>
            <person name="Brau L."/>
            <person name="Nandesena K."/>
            <person name="Tiwari R."/>
            <person name="Malfatti S."/>
            <person name="Kiss H."/>
            <person name="Lapidus A."/>
            <person name="Copeland A."/>
            <person name="Nolan M."/>
            <person name="Land M."/>
            <person name="Ivanova N."/>
            <person name="Mavromatis K."/>
            <person name="Markowitz V."/>
            <person name="Kyrpides N."/>
            <person name="Melino V."/>
            <person name="Denton M."/>
            <person name="Yates R."/>
            <person name="Howieson J."/>
        </authorList>
    </citation>
    <scope>NUCLEOTIDE SEQUENCE [LARGE SCALE GENOMIC DNA]</scope>
    <source>
        <strain>WSM2304</strain>
    </source>
</reference>
<sequence length="171" mass="19180">MAELDIQISVDDIGWPGEETLLSFCERVLGAAVIYLRDSEKQPFPTMPPEVSLVFTDDASIQDINAEWRGKDKATNVLSFPAFPVRPGKMPGPMLGDIIIARETVERETIELEKSFDDHLTHLLVHGFLHLLGYDHMNSDEAEIMEGLETRILAQLGLSDPYEGQDLKMEP</sequence>
<dbReference type="EC" id="3.1.-.-" evidence="1"/>
<dbReference type="EMBL" id="CP001191">
    <property type="protein sequence ID" value="ACI53320.1"/>
    <property type="molecule type" value="Genomic_DNA"/>
</dbReference>
<dbReference type="RefSeq" id="WP_003588998.1">
    <property type="nucleotide sequence ID" value="NC_011369.1"/>
</dbReference>
<dbReference type="SMR" id="B5ZMX9"/>
<dbReference type="STRING" id="395492.Rleg2_0017"/>
<dbReference type="KEGG" id="rlt:Rleg2_0017"/>
<dbReference type="eggNOG" id="COG0319">
    <property type="taxonomic scope" value="Bacteria"/>
</dbReference>
<dbReference type="HOGENOM" id="CLU_106710_0_0_5"/>
<dbReference type="Proteomes" id="UP000008330">
    <property type="component" value="Chromosome"/>
</dbReference>
<dbReference type="GO" id="GO:0005737">
    <property type="term" value="C:cytoplasm"/>
    <property type="evidence" value="ECO:0007669"/>
    <property type="project" value="UniProtKB-SubCell"/>
</dbReference>
<dbReference type="GO" id="GO:0004222">
    <property type="term" value="F:metalloendopeptidase activity"/>
    <property type="evidence" value="ECO:0007669"/>
    <property type="project" value="InterPro"/>
</dbReference>
<dbReference type="GO" id="GO:0004521">
    <property type="term" value="F:RNA endonuclease activity"/>
    <property type="evidence" value="ECO:0007669"/>
    <property type="project" value="UniProtKB-UniRule"/>
</dbReference>
<dbReference type="GO" id="GO:0008270">
    <property type="term" value="F:zinc ion binding"/>
    <property type="evidence" value="ECO:0007669"/>
    <property type="project" value="UniProtKB-UniRule"/>
</dbReference>
<dbReference type="GO" id="GO:0006364">
    <property type="term" value="P:rRNA processing"/>
    <property type="evidence" value="ECO:0007669"/>
    <property type="project" value="UniProtKB-UniRule"/>
</dbReference>
<dbReference type="Gene3D" id="3.40.390.30">
    <property type="entry name" value="Metalloproteases ('zincins'), catalytic domain"/>
    <property type="match status" value="1"/>
</dbReference>
<dbReference type="HAMAP" id="MF_00009">
    <property type="entry name" value="Endoribonucl_YbeY"/>
    <property type="match status" value="1"/>
</dbReference>
<dbReference type="InterPro" id="IPR023091">
    <property type="entry name" value="MetalPrtase_cat_dom_sf_prd"/>
</dbReference>
<dbReference type="InterPro" id="IPR002036">
    <property type="entry name" value="YbeY"/>
</dbReference>
<dbReference type="InterPro" id="IPR020549">
    <property type="entry name" value="YbeY_CS"/>
</dbReference>
<dbReference type="NCBIfam" id="TIGR00043">
    <property type="entry name" value="rRNA maturation RNase YbeY"/>
    <property type="match status" value="1"/>
</dbReference>
<dbReference type="PANTHER" id="PTHR46986">
    <property type="entry name" value="ENDORIBONUCLEASE YBEY, CHLOROPLASTIC"/>
    <property type="match status" value="1"/>
</dbReference>
<dbReference type="PANTHER" id="PTHR46986:SF1">
    <property type="entry name" value="ENDORIBONUCLEASE YBEY, CHLOROPLASTIC"/>
    <property type="match status" value="1"/>
</dbReference>
<dbReference type="Pfam" id="PF02130">
    <property type="entry name" value="YbeY"/>
    <property type="match status" value="1"/>
</dbReference>
<dbReference type="SUPFAM" id="SSF55486">
    <property type="entry name" value="Metalloproteases ('zincins'), catalytic domain"/>
    <property type="match status" value="1"/>
</dbReference>
<dbReference type="PROSITE" id="PS01306">
    <property type="entry name" value="UPF0054"/>
    <property type="match status" value="1"/>
</dbReference>
<keyword id="KW-0963">Cytoplasm</keyword>
<keyword id="KW-0255">Endonuclease</keyword>
<keyword id="KW-0378">Hydrolase</keyword>
<keyword id="KW-0479">Metal-binding</keyword>
<keyword id="KW-0540">Nuclease</keyword>
<keyword id="KW-1185">Reference proteome</keyword>
<keyword id="KW-0690">Ribosome biogenesis</keyword>
<keyword id="KW-0698">rRNA processing</keyword>
<keyword id="KW-0862">Zinc</keyword>
<proteinExistence type="inferred from homology"/>
<name>YBEY_RHILW</name>
<comment type="function">
    <text evidence="1">Single strand-specific metallo-endoribonuclease involved in late-stage 70S ribosome quality control and in maturation of the 3' terminus of the 16S rRNA.</text>
</comment>
<comment type="cofactor">
    <cofactor evidence="1">
        <name>Zn(2+)</name>
        <dbReference type="ChEBI" id="CHEBI:29105"/>
    </cofactor>
    <text evidence="1">Binds 1 zinc ion.</text>
</comment>
<comment type="subcellular location">
    <subcellularLocation>
        <location evidence="1">Cytoplasm</location>
    </subcellularLocation>
</comment>
<comment type="similarity">
    <text evidence="1">Belongs to the endoribonuclease YbeY family.</text>
</comment>
<accession>B5ZMX9</accession>